<accession>Q8NU99</accession>
<comment type="function">
    <text evidence="1">Involved in cell division.</text>
</comment>
<comment type="subcellular location">
    <subcellularLocation>
        <location evidence="1">Cell membrane</location>
        <topology evidence="1">Multi-pass membrane protein</topology>
    </subcellularLocation>
</comment>
<comment type="similarity">
    <text evidence="1">Belongs to the CrgA family.</text>
</comment>
<name>CRGA_CORGL</name>
<organism>
    <name type="scientific">Corynebacterium glutamicum (strain ATCC 13032 / DSM 20300 / JCM 1318 / BCRC 11384 / CCUG 27702 / LMG 3730 / NBRC 12168 / NCIMB 10025 / NRRL B-2784 / 534)</name>
    <dbReference type="NCBI Taxonomy" id="196627"/>
    <lineage>
        <taxon>Bacteria</taxon>
        <taxon>Bacillati</taxon>
        <taxon>Actinomycetota</taxon>
        <taxon>Actinomycetes</taxon>
        <taxon>Mycobacteriales</taxon>
        <taxon>Corynebacteriaceae</taxon>
        <taxon>Corynebacterium</taxon>
    </lineage>
</organism>
<protein>
    <recommendedName>
        <fullName evidence="1">Cell division protein CrgA</fullName>
    </recommendedName>
</protein>
<feature type="chain" id="PRO_0000216812" description="Cell division protein CrgA">
    <location>
        <begin position="1"/>
        <end position="90"/>
    </location>
</feature>
<feature type="transmembrane region" description="Helical" evidence="1">
    <location>
        <begin position="38"/>
        <end position="58"/>
    </location>
</feature>
<feature type="transmembrane region" description="Helical" evidence="1">
    <location>
        <begin position="67"/>
        <end position="87"/>
    </location>
</feature>
<feature type="region of interest" description="Disordered" evidence="2">
    <location>
        <begin position="1"/>
        <end position="25"/>
    </location>
</feature>
<feature type="compositionally biased region" description="Polar residues" evidence="2">
    <location>
        <begin position="9"/>
        <end position="22"/>
    </location>
</feature>
<dbReference type="EMBL" id="BA000036">
    <property type="protein sequence ID" value="BAB97433.1"/>
    <property type="molecule type" value="Genomic_DNA"/>
</dbReference>
<dbReference type="EMBL" id="BX927148">
    <property type="protein sequence ID" value="CAF18608.1"/>
    <property type="molecule type" value="Genomic_DNA"/>
</dbReference>
<dbReference type="RefSeq" id="NP_599292.1">
    <property type="nucleotide sequence ID" value="NC_003450.3"/>
</dbReference>
<dbReference type="RefSeq" id="WP_003861074.1">
    <property type="nucleotide sequence ID" value="NC_006958.1"/>
</dbReference>
<dbReference type="SMR" id="Q8NU99"/>
<dbReference type="STRING" id="196627.cg0055"/>
<dbReference type="GeneID" id="1021328"/>
<dbReference type="KEGG" id="cgb:cg0055"/>
<dbReference type="KEGG" id="cgl:Cgl0040"/>
<dbReference type="PATRIC" id="fig|196627.13.peg.40"/>
<dbReference type="eggNOG" id="ENOG5032ZHR">
    <property type="taxonomic scope" value="Bacteria"/>
</dbReference>
<dbReference type="HOGENOM" id="CLU_149126_2_0_11"/>
<dbReference type="OrthoDB" id="5189646at2"/>
<dbReference type="BioCyc" id="CORYNE:G18NG-9585-MONOMER"/>
<dbReference type="Proteomes" id="UP000000582">
    <property type="component" value="Chromosome"/>
</dbReference>
<dbReference type="Proteomes" id="UP000001009">
    <property type="component" value="Chromosome"/>
</dbReference>
<dbReference type="GO" id="GO:0005886">
    <property type="term" value="C:plasma membrane"/>
    <property type="evidence" value="ECO:0007669"/>
    <property type="project" value="UniProtKB-SubCell"/>
</dbReference>
<dbReference type="GO" id="GO:0051301">
    <property type="term" value="P:cell division"/>
    <property type="evidence" value="ECO:0007669"/>
    <property type="project" value="UniProtKB-UniRule"/>
</dbReference>
<dbReference type="HAMAP" id="MF_00631">
    <property type="entry name" value="CrgA"/>
    <property type="match status" value="1"/>
</dbReference>
<dbReference type="InterPro" id="IPR009619">
    <property type="entry name" value="CrgA"/>
</dbReference>
<dbReference type="NCBIfam" id="NF001194">
    <property type="entry name" value="PRK00159.1"/>
    <property type="match status" value="1"/>
</dbReference>
<dbReference type="Pfam" id="PF06781">
    <property type="entry name" value="CrgA"/>
    <property type="match status" value="1"/>
</dbReference>
<proteinExistence type="inferred from homology"/>
<gene>
    <name evidence="1" type="primary">crgA</name>
    <name type="ordered locus">Cgl0040</name>
    <name type="ordered locus">cg0055</name>
</gene>
<reference key="1">
    <citation type="journal article" date="2003" name="Appl. Microbiol. Biotechnol.">
        <title>The Corynebacterium glutamicum genome: features and impacts on biotechnological processes.</title>
        <authorList>
            <person name="Ikeda M."/>
            <person name="Nakagawa S."/>
        </authorList>
    </citation>
    <scope>NUCLEOTIDE SEQUENCE [LARGE SCALE GENOMIC DNA]</scope>
    <source>
        <strain>ATCC 13032 / DSM 20300 / JCM 1318 / BCRC 11384 / CCUG 27702 / LMG 3730 / NBRC 12168 / NCIMB 10025 / NRRL B-2784 / 534</strain>
    </source>
</reference>
<reference key="2">
    <citation type="journal article" date="2003" name="J. Biotechnol.">
        <title>The complete Corynebacterium glutamicum ATCC 13032 genome sequence and its impact on the production of L-aspartate-derived amino acids and vitamins.</title>
        <authorList>
            <person name="Kalinowski J."/>
            <person name="Bathe B."/>
            <person name="Bartels D."/>
            <person name="Bischoff N."/>
            <person name="Bott M."/>
            <person name="Burkovski A."/>
            <person name="Dusch N."/>
            <person name="Eggeling L."/>
            <person name="Eikmanns B.J."/>
            <person name="Gaigalat L."/>
            <person name="Goesmann A."/>
            <person name="Hartmann M."/>
            <person name="Huthmacher K."/>
            <person name="Kraemer R."/>
            <person name="Linke B."/>
            <person name="McHardy A.C."/>
            <person name="Meyer F."/>
            <person name="Moeckel B."/>
            <person name="Pfefferle W."/>
            <person name="Puehler A."/>
            <person name="Rey D.A."/>
            <person name="Rueckert C."/>
            <person name="Rupp O."/>
            <person name="Sahm H."/>
            <person name="Wendisch V.F."/>
            <person name="Wiegraebe I."/>
            <person name="Tauch A."/>
        </authorList>
    </citation>
    <scope>NUCLEOTIDE SEQUENCE [LARGE SCALE GENOMIC DNA]</scope>
    <source>
        <strain>ATCC 13032 / DSM 20300 / JCM 1318 / BCRC 11384 / CCUG 27702 / LMG 3730 / NBRC 12168 / NCIMB 10025 / NRRL B-2784 / 534</strain>
    </source>
</reference>
<sequence length="90" mass="9950">MPKARVTKNETAPVSSNPSANRTPVKINSAGTPMWYKVIMFAFMIVGLAWLIINYLVGPQIPFMADLGAWNYGIGFGLMIIGLLMTMGWR</sequence>
<evidence type="ECO:0000255" key="1">
    <source>
        <dbReference type="HAMAP-Rule" id="MF_00631"/>
    </source>
</evidence>
<evidence type="ECO:0000256" key="2">
    <source>
        <dbReference type="SAM" id="MobiDB-lite"/>
    </source>
</evidence>
<keyword id="KW-0131">Cell cycle</keyword>
<keyword id="KW-0132">Cell division</keyword>
<keyword id="KW-1003">Cell membrane</keyword>
<keyword id="KW-0472">Membrane</keyword>
<keyword id="KW-1185">Reference proteome</keyword>
<keyword id="KW-0812">Transmembrane</keyword>
<keyword id="KW-1133">Transmembrane helix</keyword>